<proteinExistence type="evidence at protein level"/>
<organism>
    <name type="scientific">Phoneutria nigriventer</name>
    <name type="common">Brazilian armed spider</name>
    <name type="synonym">Ctenus nigriventer</name>
    <dbReference type="NCBI Taxonomy" id="6918"/>
    <lineage>
        <taxon>Eukaryota</taxon>
        <taxon>Metazoa</taxon>
        <taxon>Ecdysozoa</taxon>
        <taxon>Arthropoda</taxon>
        <taxon>Chelicerata</taxon>
        <taxon>Arachnida</taxon>
        <taxon>Araneae</taxon>
        <taxon>Araneomorphae</taxon>
        <taxon>Entelegynae</taxon>
        <taxon>Lycosoidea</taxon>
        <taxon>Ctenidae</taxon>
        <taxon>Phoneutria</taxon>
    </lineage>
</organism>
<evidence type="ECO:0000255" key="1"/>
<evidence type="ECO:0000269" key="2">
    <source>
    </source>
</evidence>
<evidence type="ECO:0000303" key="3">
    <source>
    </source>
</evidence>
<evidence type="ECO:0000305" key="4"/>
<evidence type="ECO:0000305" key="5">
    <source>
    </source>
</evidence>
<name>TLP15_PHONI</name>
<feature type="peptide" id="PRO_0000402825" description="Tachykinin-like peptide-XV" evidence="2">
    <location>
        <begin position="1"/>
        <end position="14"/>
    </location>
</feature>
<feature type="modified residue" description="Pyrrolidone carboxylic acid" evidence="2">
    <location>
        <position position="1"/>
    </location>
</feature>
<feature type="modified residue" description="Valine amide" evidence="2">
    <location>
        <position position="14"/>
    </location>
</feature>
<sequence>QKKDKKDRFPNGLV</sequence>
<protein>
    <recommendedName>
        <fullName evidence="5">Tachykinin-like peptide-XV</fullName>
    </recommendedName>
    <alternativeName>
        <fullName evidence="3">P.nigriventer tachykinin peptides XV</fullName>
        <shortName evidence="3">PnTkP-XV</shortName>
    </alternativeName>
    <alternativeName>
        <fullName evidence="4">U29-ctenitoxin-Pn1o</fullName>
        <shortName evidence="4">U29-CNTX-Pn1o</shortName>
    </alternativeName>
</protein>
<keyword id="KW-0027">Amidation</keyword>
<keyword id="KW-0903">Direct protein sequencing</keyword>
<keyword id="KW-0873">Pyrrolidone carboxylic acid</keyword>
<keyword id="KW-0964">Secreted</keyword>
<dbReference type="GO" id="GO:0005576">
    <property type="term" value="C:extracellular region"/>
    <property type="evidence" value="ECO:0000314"/>
    <property type="project" value="UniProtKB"/>
</dbReference>
<accession>P86297</accession>
<reference evidence="4" key="1">
    <citation type="journal article" date="2005" name="Rapid Commun. Mass Spectrom.">
        <title>Electrospray ionization quadrupole time-of-flight and matrix-assisted laser desorption/ionization tandem time-of-flight mass spectrometric analyses to solve micro-heterogeneity in post-translationally modified peptides from Phoneutria nigriventer (Aranea, Ctenidae) venom.</title>
        <authorList>
            <person name="Pimenta A.M.C."/>
            <person name="Rates B."/>
            <person name="Bloch C. Jr."/>
            <person name="Gomes P.C."/>
            <person name="Santoro M.M."/>
            <person name="de Lima M.E."/>
            <person name="Richardson M."/>
            <person name="Cordeiro M.N."/>
        </authorList>
    </citation>
    <scope>PROTEIN SEQUENCE</scope>
    <scope>SUBCELLULAR LOCATION</scope>
    <scope>TISSUE SPECIFICITY</scope>
    <scope>MASS SPECTROMETRY</scope>
    <scope>PYROGLUTAMATE FORMATION AT GLN-1</scope>
    <scope>AMIDATION AT VAL-14</scope>
    <source>
        <tissue evidence="2">Venom</tissue>
    </source>
</reference>
<comment type="subcellular location">
    <subcellularLocation>
        <location evidence="2">Secreted</location>
    </subcellularLocation>
</comment>
<comment type="tissue specificity">
    <text evidence="2">Expressed by the venom gland.</text>
</comment>
<comment type="mass spectrometry"/>
<comment type="similarity">
    <text evidence="1">Belongs to the tachykinin family.</text>
</comment>